<protein>
    <recommendedName>
        <fullName evidence="1">Pyridoxine 5'-phosphate synthase</fullName>
        <shortName evidence="1">PNP synthase</shortName>
        <ecNumber evidence="1">2.6.99.2</ecNumber>
    </recommendedName>
</protein>
<dbReference type="EC" id="2.6.99.2" evidence="1"/>
<dbReference type="EMBL" id="CP000825">
    <property type="protein sequence ID" value="ABV50858.1"/>
    <property type="molecule type" value="Genomic_DNA"/>
</dbReference>
<dbReference type="RefSeq" id="WP_012007930.1">
    <property type="nucleotide sequence ID" value="NC_009840.1"/>
</dbReference>
<dbReference type="SMR" id="A8G5H7"/>
<dbReference type="STRING" id="93060.P9215_12431"/>
<dbReference type="KEGG" id="pmh:P9215_12431"/>
<dbReference type="eggNOG" id="COG0854">
    <property type="taxonomic scope" value="Bacteria"/>
</dbReference>
<dbReference type="HOGENOM" id="CLU_074563_0_0_3"/>
<dbReference type="OrthoDB" id="9806590at2"/>
<dbReference type="UniPathway" id="UPA00244">
    <property type="reaction ID" value="UER00313"/>
</dbReference>
<dbReference type="Proteomes" id="UP000002014">
    <property type="component" value="Chromosome"/>
</dbReference>
<dbReference type="GO" id="GO:0005829">
    <property type="term" value="C:cytosol"/>
    <property type="evidence" value="ECO:0007669"/>
    <property type="project" value="TreeGrafter"/>
</dbReference>
<dbReference type="GO" id="GO:0033856">
    <property type="term" value="F:pyridoxine 5'-phosphate synthase activity"/>
    <property type="evidence" value="ECO:0007669"/>
    <property type="project" value="UniProtKB-EC"/>
</dbReference>
<dbReference type="GO" id="GO:0008615">
    <property type="term" value="P:pyridoxine biosynthetic process"/>
    <property type="evidence" value="ECO:0007669"/>
    <property type="project" value="UniProtKB-UniRule"/>
</dbReference>
<dbReference type="CDD" id="cd00003">
    <property type="entry name" value="PNPsynthase"/>
    <property type="match status" value="1"/>
</dbReference>
<dbReference type="Gene3D" id="3.20.20.70">
    <property type="entry name" value="Aldolase class I"/>
    <property type="match status" value="1"/>
</dbReference>
<dbReference type="HAMAP" id="MF_00279">
    <property type="entry name" value="PdxJ"/>
    <property type="match status" value="1"/>
</dbReference>
<dbReference type="InterPro" id="IPR013785">
    <property type="entry name" value="Aldolase_TIM"/>
</dbReference>
<dbReference type="InterPro" id="IPR004569">
    <property type="entry name" value="PyrdxlP_synth_PdxJ"/>
</dbReference>
<dbReference type="InterPro" id="IPR036130">
    <property type="entry name" value="Pyridoxine-5'_phos_synth"/>
</dbReference>
<dbReference type="NCBIfam" id="TIGR00559">
    <property type="entry name" value="pdxJ"/>
    <property type="match status" value="1"/>
</dbReference>
<dbReference type="NCBIfam" id="NF003625">
    <property type="entry name" value="PRK05265.1-3"/>
    <property type="match status" value="1"/>
</dbReference>
<dbReference type="NCBIfam" id="NF003627">
    <property type="entry name" value="PRK05265.1-5"/>
    <property type="match status" value="1"/>
</dbReference>
<dbReference type="PANTHER" id="PTHR30456">
    <property type="entry name" value="PYRIDOXINE 5'-PHOSPHATE SYNTHASE"/>
    <property type="match status" value="1"/>
</dbReference>
<dbReference type="PANTHER" id="PTHR30456:SF0">
    <property type="entry name" value="PYRIDOXINE 5'-PHOSPHATE SYNTHASE"/>
    <property type="match status" value="1"/>
</dbReference>
<dbReference type="Pfam" id="PF03740">
    <property type="entry name" value="PdxJ"/>
    <property type="match status" value="1"/>
</dbReference>
<dbReference type="SUPFAM" id="SSF63892">
    <property type="entry name" value="Pyridoxine 5'-phosphate synthase"/>
    <property type="match status" value="1"/>
</dbReference>
<organism>
    <name type="scientific">Prochlorococcus marinus (strain MIT 9215)</name>
    <dbReference type="NCBI Taxonomy" id="93060"/>
    <lineage>
        <taxon>Bacteria</taxon>
        <taxon>Bacillati</taxon>
        <taxon>Cyanobacteriota</taxon>
        <taxon>Cyanophyceae</taxon>
        <taxon>Synechococcales</taxon>
        <taxon>Prochlorococcaceae</taxon>
        <taxon>Prochlorococcus</taxon>
    </lineage>
</organism>
<evidence type="ECO:0000255" key="1">
    <source>
        <dbReference type="HAMAP-Rule" id="MF_00279"/>
    </source>
</evidence>
<name>PDXJ_PROM2</name>
<proteinExistence type="inferred from homology"/>
<reference key="1">
    <citation type="journal article" date="2007" name="PLoS Genet.">
        <title>Patterns and implications of gene gain and loss in the evolution of Prochlorococcus.</title>
        <authorList>
            <person name="Kettler G.C."/>
            <person name="Martiny A.C."/>
            <person name="Huang K."/>
            <person name="Zucker J."/>
            <person name="Coleman M.L."/>
            <person name="Rodrigue S."/>
            <person name="Chen F."/>
            <person name="Lapidus A."/>
            <person name="Ferriera S."/>
            <person name="Johnson J."/>
            <person name="Steglich C."/>
            <person name="Church G.M."/>
            <person name="Richardson P."/>
            <person name="Chisholm S.W."/>
        </authorList>
    </citation>
    <scope>NUCLEOTIDE SEQUENCE [LARGE SCALE GENOMIC DNA]</scope>
    <source>
        <strain>MIT 9215</strain>
    </source>
</reference>
<sequence>MATLGVNIDHIANVRQARKTVEPDPVQFAFLAELGGADSITVHLREDRRHIQDRDLFLLKETIKTKLNLEMAATEEMLEIAKKILPDYVTLVPEKREEVTTEGGLDLKSNVQYLKKAVGNLQDSNIEVSAFIDPLGEQINYSKEIGFDFIELHTGKYAKLSGSDQYKELQRIIESTYLANDLGLVVNAGHGLNYNNVKKIASINNMNELNIGHSIVARALAIGLEKSVREMKSLITSN</sequence>
<gene>
    <name evidence="1" type="primary">pdxJ</name>
    <name type="ordered locus">P9215_12431</name>
</gene>
<comment type="function">
    <text evidence="1">Catalyzes the complicated ring closure reaction between the two acyclic compounds 1-deoxy-D-xylulose-5-phosphate (DXP) and 3-amino-2-oxopropyl phosphate (1-amino-acetone-3-phosphate or AAP) to form pyridoxine 5'-phosphate (PNP) and inorganic phosphate.</text>
</comment>
<comment type="catalytic activity">
    <reaction evidence="1">
        <text>3-amino-2-oxopropyl phosphate + 1-deoxy-D-xylulose 5-phosphate = pyridoxine 5'-phosphate + phosphate + 2 H2O + H(+)</text>
        <dbReference type="Rhea" id="RHEA:15265"/>
        <dbReference type="ChEBI" id="CHEBI:15377"/>
        <dbReference type="ChEBI" id="CHEBI:15378"/>
        <dbReference type="ChEBI" id="CHEBI:43474"/>
        <dbReference type="ChEBI" id="CHEBI:57279"/>
        <dbReference type="ChEBI" id="CHEBI:57792"/>
        <dbReference type="ChEBI" id="CHEBI:58589"/>
        <dbReference type="EC" id="2.6.99.2"/>
    </reaction>
</comment>
<comment type="pathway">
    <text evidence="1">Cofactor biosynthesis; pyridoxine 5'-phosphate biosynthesis; pyridoxine 5'-phosphate from D-erythrose 4-phosphate: step 5/5.</text>
</comment>
<comment type="subunit">
    <text evidence="1">Homooctamer; tetramer of dimers.</text>
</comment>
<comment type="subcellular location">
    <subcellularLocation>
        <location evidence="1">Cytoplasm</location>
    </subcellularLocation>
</comment>
<comment type="similarity">
    <text evidence="1">Belongs to the PNP synthase family.</text>
</comment>
<accession>A8G5H7</accession>
<keyword id="KW-0963">Cytoplasm</keyword>
<keyword id="KW-0664">Pyridoxine biosynthesis</keyword>
<keyword id="KW-0808">Transferase</keyword>
<feature type="chain" id="PRO_1000059230" description="Pyridoxine 5'-phosphate synthase">
    <location>
        <begin position="1"/>
        <end position="238"/>
    </location>
</feature>
<feature type="active site" description="Proton acceptor" evidence="1">
    <location>
        <position position="43"/>
    </location>
</feature>
<feature type="active site" description="Proton acceptor" evidence="1">
    <location>
        <position position="70"/>
    </location>
</feature>
<feature type="active site" description="Proton donor" evidence="1">
    <location>
        <position position="190"/>
    </location>
</feature>
<feature type="binding site" evidence="1">
    <location>
        <position position="7"/>
    </location>
    <ligand>
        <name>3-amino-2-oxopropyl phosphate</name>
        <dbReference type="ChEBI" id="CHEBI:57279"/>
    </ligand>
</feature>
<feature type="binding site" evidence="1">
    <location>
        <begin position="9"/>
        <end position="10"/>
    </location>
    <ligand>
        <name>1-deoxy-D-xylulose 5-phosphate</name>
        <dbReference type="ChEBI" id="CHEBI:57792"/>
    </ligand>
</feature>
<feature type="binding site" evidence="1">
    <location>
        <position position="18"/>
    </location>
    <ligand>
        <name>3-amino-2-oxopropyl phosphate</name>
        <dbReference type="ChEBI" id="CHEBI:57279"/>
    </ligand>
</feature>
<feature type="binding site" evidence="1">
    <location>
        <position position="45"/>
    </location>
    <ligand>
        <name>1-deoxy-D-xylulose 5-phosphate</name>
        <dbReference type="ChEBI" id="CHEBI:57792"/>
    </ligand>
</feature>
<feature type="binding site" evidence="1">
    <location>
        <position position="50"/>
    </location>
    <ligand>
        <name>1-deoxy-D-xylulose 5-phosphate</name>
        <dbReference type="ChEBI" id="CHEBI:57792"/>
    </ligand>
</feature>
<feature type="binding site" evidence="1">
    <location>
        <position position="100"/>
    </location>
    <ligand>
        <name>1-deoxy-D-xylulose 5-phosphate</name>
        <dbReference type="ChEBI" id="CHEBI:57792"/>
    </ligand>
</feature>
<feature type="binding site" evidence="1">
    <location>
        <position position="191"/>
    </location>
    <ligand>
        <name>3-amino-2-oxopropyl phosphate</name>
        <dbReference type="ChEBI" id="CHEBI:57279"/>
    </ligand>
</feature>
<feature type="binding site" evidence="1">
    <location>
        <begin position="212"/>
        <end position="213"/>
    </location>
    <ligand>
        <name>3-amino-2-oxopropyl phosphate</name>
        <dbReference type="ChEBI" id="CHEBI:57279"/>
    </ligand>
</feature>
<feature type="site" description="Transition state stabilizer" evidence="1">
    <location>
        <position position="151"/>
    </location>
</feature>